<dbReference type="EMBL" id="AY653733">
    <property type="protein sequence ID" value="AAV51096.1"/>
    <property type="molecule type" value="Genomic_DNA"/>
</dbReference>
<dbReference type="Proteomes" id="UP000001134">
    <property type="component" value="Genome"/>
</dbReference>
<dbReference type="Gene3D" id="1.25.40.20">
    <property type="entry name" value="Ankyrin repeat-containing domain"/>
    <property type="match status" value="1"/>
</dbReference>
<dbReference type="InterPro" id="IPR002110">
    <property type="entry name" value="Ankyrin_rpt"/>
</dbReference>
<dbReference type="InterPro" id="IPR036770">
    <property type="entry name" value="Ankyrin_rpt-contain_sf"/>
</dbReference>
<dbReference type="PANTHER" id="PTHR24188">
    <property type="entry name" value="ANKYRIN REPEAT PROTEIN"/>
    <property type="match status" value="1"/>
</dbReference>
<dbReference type="PANTHER" id="PTHR24188:SF29">
    <property type="entry name" value="GH09064P"/>
    <property type="match status" value="1"/>
</dbReference>
<dbReference type="Pfam" id="PF12796">
    <property type="entry name" value="Ank_2"/>
    <property type="match status" value="2"/>
</dbReference>
<dbReference type="PRINTS" id="PR01415">
    <property type="entry name" value="ANKYRIN"/>
</dbReference>
<dbReference type="SMART" id="SM00248">
    <property type="entry name" value="ANK"/>
    <property type="match status" value="4"/>
</dbReference>
<dbReference type="SUPFAM" id="SSF48403">
    <property type="entry name" value="Ankyrin repeat"/>
    <property type="match status" value="1"/>
</dbReference>
<dbReference type="PROSITE" id="PS50297">
    <property type="entry name" value="ANK_REP_REGION"/>
    <property type="match status" value="1"/>
</dbReference>
<dbReference type="PROSITE" id="PS50088">
    <property type="entry name" value="ANK_REPEAT"/>
    <property type="match status" value="3"/>
</dbReference>
<sequence>MDFSDLKKPGKVFFTITDEPEIKNGFQLKDGLNIIDSDKEVPQEFDCDYKPIVPNXLYFSEPKYICEYMAYGIYLREVYLPDDPKLKITRMKNFPCGKSMMYGANMIILGKKHKLSDPETYEYIEKCGGKLRYDGDNALLMAAENGYYEVVTYLINKGCDPRSDYDYALRSAAEKGHIDVVKLLLEKGADISSHNHWPLSYAALEGKFEMVKFLISRGADVRAKNYNPIKYALDGGHREIADYMLDLCPEIGSVSDDDTYDSDSSDYSEDDSESIN</sequence>
<evidence type="ECO:0000256" key="1">
    <source>
        <dbReference type="SAM" id="MobiDB-lite"/>
    </source>
</evidence>
<organismHost>
    <name type="scientific">Acanthamoeba polyphaga</name>
    <name type="common">Amoeba</name>
    <dbReference type="NCBI Taxonomy" id="5757"/>
</organismHost>
<feature type="chain" id="PRO_0000067208" description="Putative ankyrin repeat protein R838">
    <location>
        <begin position="1"/>
        <end position="276"/>
    </location>
</feature>
<feature type="repeat" description="ANK 1">
    <location>
        <begin position="134"/>
        <end position="163"/>
    </location>
</feature>
<feature type="repeat" description="ANK 2">
    <location>
        <begin position="164"/>
        <end position="193"/>
    </location>
</feature>
<feature type="repeat" description="ANK 3">
    <location>
        <begin position="195"/>
        <end position="223"/>
    </location>
</feature>
<feature type="repeat" description="ANK 4">
    <location>
        <begin position="225"/>
        <end position="253"/>
    </location>
</feature>
<feature type="region of interest" description="Disordered" evidence="1">
    <location>
        <begin position="254"/>
        <end position="276"/>
    </location>
</feature>
<feature type="compositionally biased region" description="Acidic residues" evidence="1">
    <location>
        <begin position="255"/>
        <end position="276"/>
    </location>
</feature>
<protein>
    <recommendedName>
        <fullName>Putative ankyrin repeat protein R838</fullName>
    </recommendedName>
</protein>
<proteinExistence type="predicted"/>
<gene>
    <name type="ordered locus">MIMI_R838</name>
</gene>
<name>YR838_MIMIV</name>
<reference key="1">
    <citation type="journal article" date="2004" name="Science">
        <title>The 1.2-megabase genome sequence of Mimivirus.</title>
        <authorList>
            <person name="Raoult D."/>
            <person name="Audic S."/>
            <person name="Robert C."/>
            <person name="Abergel C."/>
            <person name="Renesto P."/>
            <person name="Ogata H."/>
            <person name="La Scola B."/>
            <person name="Susan M."/>
            <person name="Claverie J.-M."/>
        </authorList>
    </citation>
    <scope>NUCLEOTIDE SEQUENCE [LARGE SCALE GENOMIC DNA]</scope>
    <source>
        <strain>Rowbotham-Bradford</strain>
    </source>
</reference>
<keyword id="KW-0040">ANK repeat</keyword>
<keyword id="KW-1185">Reference proteome</keyword>
<keyword id="KW-0677">Repeat</keyword>
<accession>Q5UQI7</accession>
<organism>
    <name type="scientific">Acanthamoeba polyphaga mimivirus</name>
    <name type="common">APMV</name>
    <dbReference type="NCBI Taxonomy" id="212035"/>
    <lineage>
        <taxon>Viruses</taxon>
        <taxon>Varidnaviria</taxon>
        <taxon>Bamfordvirae</taxon>
        <taxon>Nucleocytoviricota</taxon>
        <taxon>Megaviricetes</taxon>
        <taxon>Imitervirales</taxon>
        <taxon>Mimiviridae</taxon>
        <taxon>Megamimivirinae</taxon>
        <taxon>Mimivirus</taxon>
        <taxon>Mimivirus bradfordmassiliense</taxon>
    </lineage>
</organism>